<reference key="1">
    <citation type="journal article" date="2003" name="J. Bacteriol.">
        <title>Comparative analyses of the complete genome sequences of Pierce's disease and citrus variegated chlorosis strains of Xylella fastidiosa.</title>
        <authorList>
            <person name="Van Sluys M.A."/>
            <person name="de Oliveira M.C."/>
            <person name="Monteiro-Vitorello C.B."/>
            <person name="Miyaki C.Y."/>
            <person name="Furlan L.R."/>
            <person name="Camargo L.E.A."/>
            <person name="da Silva A.C.R."/>
            <person name="Moon D.H."/>
            <person name="Takita M.A."/>
            <person name="Lemos E.G.M."/>
            <person name="Machado M.A."/>
            <person name="Ferro M.I.T."/>
            <person name="da Silva F.R."/>
            <person name="Goldman M.H.S."/>
            <person name="Goldman G.H."/>
            <person name="Lemos M.V.F."/>
            <person name="El-Dorry H."/>
            <person name="Tsai S.M."/>
            <person name="Carrer H."/>
            <person name="Carraro D.M."/>
            <person name="de Oliveira R.C."/>
            <person name="Nunes L.R."/>
            <person name="Siqueira W.J."/>
            <person name="Coutinho L.L."/>
            <person name="Kimura E.T."/>
            <person name="Ferro E.S."/>
            <person name="Harakava R."/>
            <person name="Kuramae E.E."/>
            <person name="Marino C.L."/>
            <person name="Giglioti E."/>
            <person name="Abreu I.L."/>
            <person name="Alves L.M.C."/>
            <person name="do Amaral A.M."/>
            <person name="Baia G.S."/>
            <person name="Blanco S.R."/>
            <person name="Brito M.S."/>
            <person name="Cannavan F.S."/>
            <person name="Celestino A.V."/>
            <person name="da Cunha A.F."/>
            <person name="Fenille R.C."/>
            <person name="Ferro J.A."/>
            <person name="Formighieri E.F."/>
            <person name="Kishi L.T."/>
            <person name="Leoni S.G."/>
            <person name="Oliveira A.R."/>
            <person name="Rosa V.E. Jr."/>
            <person name="Sassaki F.T."/>
            <person name="Sena J.A.D."/>
            <person name="de Souza A.A."/>
            <person name="Truffi D."/>
            <person name="Tsukumo F."/>
            <person name="Yanai G.M."/>
            <person name="Zaros L.G."/>
            <person name="Civerolo E.L."/>
            <person name="Simpson A.J.G."/>
            <person name="Almeida N.F. Jr."/>
            <person name="Setubal J.C."/>
            <person name="Kitajima J.P."/>
        </authorList>
    </citation>
    <scope>NUCLEOTIDE SEQUENCE [LARGE SCALE GENOMIC DNA]</scope>
    <source>
        <strain>Temecula1 / ATCC 700964</strain>
    </source>
</reference>
<gene>
    <name evidence="1" type="primary">rlmH</name>
    <name type="ordered locus">PD_1712</name>
</gene>
<dbReference type="EC" id="2.1.1.177" evidence="1"/>
<dbReference type="EMBL" id="AE009442">
    <property type="protein sequence ID" value="AAO29550.1"/>
    <property type="molecule type" value="Genomic_DNA"/>
</dbReference>
<dbReference type="SMR" id="Q87AV1"/>
<dbReference type="KEGG" id="xft:PD_1712"/>
<dbReference type="HOGENOM" id="CLU_100552_1_0_6"/>
<dbReference type="Proteomes" id="UP000002516">
    <property type="component" value="Chromosome"/>
</dbReference>
<dbReference type="GO" id="GO:0005737">
    <property type="term" value="C:cytoplasm"/>
    <property type="evidence" value="ECO:0007669"/>
    <property type="project" value="UniProtKB-SubCell"/>
</dbReference>
<dbReference type="GO" id="GO:0070038">
    <property type="term" value="F:rRNA (pseudouridine-N3-)-methyltransferase activity"/>
    <property type="evidence" value="ECO:0007669"/>
    <property type="project" value="UniProtKB-UniRule"/>
</dbReference>
<dbReference type="CDD" id="cd18081">
    <property type="entry name" value="RlmH-like"/>
    <property type="match status" value="1"/>
</dbReference>
<dbReference type="Gene3D" id="3.40.1280.10">
    <property type="match status" value="1"/>
</dbReference>
<dbReference type="HAMAP" id="MF_00658">
    <property type="entry name" value="23SrRNA_methyltr_H"/>
    <property type="match status" value="1"/>
</dbReference>
<dbReference type="InterPro" id="IPR029028">
    <property type="entry name" value="Alpha/beta_knot_MTases"/>
</dbReference>
<dbReference type="InterPro" id="IPR003742">
    <property type="entry name" value="RlmH-like"/>
</dbReference>
<dbReference type="InterPro" id="IPR029026">
    <property type="entry name" value="tRNA_m1G_MTases_N"/>
</dbReference>
<dbReference type="NCBIfam" id="NF000986">
    <property type="entry name" value="PRK00103.1-4"/>
    <property type="match status" value="1"/>
</dbReference>
<dbReference type="NCBIfam" id="TIGR00246">
    <property type="entry name" value="tRNA_RlmH_YbeA"/>
    <property type="match status" value="1"/>
</dbReference>
<dbReference type="PANTHER" id="PTHR33603">
    <property type="entry name" value="METHYLTRANSFERASE"/>
    <property type="match status" value="1"/>
</dbReference>
<dbReference type="PANTHER" id="PTHR33603:SF1">
    <property type="entry name" value="RIBOSOMAL RNA LARGE SUBUNIT METHYLTRANSFERASE H"/>
    <property type="match status" value="1"/>
</dbReference>
<dbReference type="Pfam" id="PF02590">
    <property type="entry name" value="SPOUT_MTase"/>
    <property type="match status" value="1"/>
</dbReference>
<dbReference type="PIRSF" id="PIRSF004505">
    <property type="entry name" value="MT_bac"/>
    <property type="match status" value="1"/>
</dbReference>
<dbReference type="SUPFAM" id="SSF75217">
    <property type="entry name" value="alpha/beta knot"/>
    <property type="match status" value="1"/>
</dbReference>
<sequence length="158" mass="18116">MMKCLLIATGQHVPTWVAQGFAEYHRRLSYWLPLELVEIEPSMRGKNHDPQRAIEDEGRRVMAALPKQPYAVTLDVKGKPLNSEQLAQRMEHWRGLGRNLVFLIGGPEGHSQEVLNISNERWSLGPLTLPHMLVRLIVVEQLYRAATILTNHPYHRGK</sequence>
<keyword id="KW-0963">Cytoplasm</keyword>
<keyword id="KW-0489">Methyltransferase</keyword>
<keyword id="KW-1185">Reference proteome</keyword>
<keyword id="KW-0698">rRNA processing</keyword>
<keyword id="KW-0949">S-adenosyl-L-methionine</keyword>
<keyword id="KW-0808">Transferase</keyword>
<accession>Q87AV1</accession>
<evidence type="ECO:0000255" key="1">
    <source>
        <dbReference type="HAMAP-Rule" id="MF_00658"/>
    </source>
</evidence>
<organism>
    <name type="scientific">Xylella fastidiosa (strain Temecula1 / ATCC 700964)</name>
    <dbReference type="NCBI Taxonomy" id="183190"/>
    <lineage>
        <taxon>Bacteria</taxon>
        <taxon>Pseudomonadati</taxon>
        <taxon>Pseudomonadota</taxon>
        <taxon>Gammaproteobacteria</taxon>
        <taxon>Lysobacterales</taxon>
        <taxon>Lysobacteraceae</taxon>
        <taxon>Xylella</taxon>
    </lineage>
</organism>
<proteinExistence type="inferred from homology"/>
<feature type="chain" id="PRO_0000198216" description="Ribosomal RNA large subunit methyltransferase H">
    <location>
        <begin position="1"/>
        <end position="158"/>
    </location>
</feature>
<feature type="binding site" evidence="1">
    <location>
        <position position="74"/>
    </location>
    <ligand>
        <name>S-adenosyl-L-methionine</name>
        <dbReference type="ChEBI" id="CHEBI:59789"/>
    </ligand>
</feature>
<feature type="binding site" evidence="1">
    <location>
        <position position="105"/>
    </location>
    <ligand>
        <name>S-adenosyl-L-methionine</name>
        <dbReference type="ChEBI" id="CHEBI:59789"/>
    </ligand>
</feature>
<feature type="binding site" evidence="1">
    <location>
        <begin position="124"/>
        <end position="129"/>
    </location>
    <ligand>
        <name>S-adenosyl-L-methionine</name>
        <dbReference type="ChEBI" id="CHEBI:59789"/>
    </ligand>
</feature>
<protein>
    <recommendedName>
        <fullName evidence="1">Ribosomal RNA large subunit methyltransferase H</fullName>
        <ecNumber evidence="1">2.1.1.177</ecNumber>
    </recommendedName>
    <alternativeName>
        <fullName evidence="1">23S rRNA (pseudouridine1915-N3)-methyltransferase</fullName>
    </alternativeName>
    <alternativeName>
        <fullName evidence="1">23S rRNA m3Psi1915 methyltransferase</fullName>
    </alternativeName>
    <alternativeName>
        <fullName evidence="1">rRNA (pseudouridine-N3-)-methyltransferase RlmH</fullName>
    </alternativeName>
</protein>
<name>RLMH_XYLFT</name>
<comment type="function">
    <text evidence="1">Specifically methylates the pseudouridine at position 1915 (m3Psi1915) in 23S rRNA.</text>
</comment>
<comment type="catalytic activity">
    <reaction evidence="1">
        <text>pseudouridine(1915) in 23S rRNA + S-adenosyl-L-methionine = N(3)-methylpseudouridine(1915) in 23S rRNA + S-adenosyl-L-homocysteine + H(+)</text>
        <dbReference type="Rhea" id="RHEA:42752"/>
        <dbReference type="Rhea" id="RHEA-COMP:10221"/>
        <dbReference type="Rhea" id="RHEA-COMP:10222"/>
        <dbReference type="ChEBI" id="CHEBI:15378"/>
        <dbReference type="ChEBI" id="CHEBI:57856"/>
        <dbReference type="ChEBI" id="CHEBI:59789"/>
        <dbReference type="ChEBI" id="CHEBI:65314"/>
        <dbReference type="ChEBI" id="CHEBI:74486"/>
        <dbReference type="EC" id="2.1.1.177"/>
    </reaction>
</comment>
<comment type="subunit">
    <text evidence="1">Homodimer.</text>
</comment>
<comment type="subcellular location">
    <subcellularLocation>
        <location evidence="1">Cytoplasm</location>
    </subcellularLocation>
</comment>
<comment type="similarity">
    <text evidence="1">Belongs to the RNA methyltransferase RlmH family.</text>
</comment>